<dbReference type="EMBL" id="AF050180">
    <property type="protein sequence ID" value="AAC32817.1"/>
    <property type="molecule type" value="mRNA"/>
</dbReference>
<dbReference type="EMBL" id="AF323785">
    <property type="protein sequence ID" value="AAK11580.1"/>
    <property type="molecule type" value="Genomic_DNA"/>
</dbReference>
<dbReference type="EMBL" id="CM000130">
    <property type="status" value="NOT_ANNOTATED_CDS"/>
    <property type="molecule type" value="Genomic_DNA"/>
</dbReference>
<dbReference type="SMR" id="A2Y007"/>
<dbReference type="STRING" id="39946.A2Y007"/>
<dbReference type="EnsemblPlants" id="BGIOSGA018883-TA">
    <property type="protein sequence ID" value="BGIOSGA018883-PA"/>
    <property type="gene ID" value="BGIOSGA018883"/>
</dbReference>
<dbReference type="EnsemblPlants" id="OsIR64_05g0002190.01">
    <property type="protein sequence ID" value="OsIR64_05g0002190.01"/>
    <property type="gene ID" value="OsIR64_05g0002190"/>
</dbReference>
<dbReference type="EnsemblPlants" id="OsLaMu_05g0002240.01">
    <property type="protein sequence ID" value="OsLaMu_05g0002240.01"/>
    <property type="gene ID" value="OsLaMu_05g0002240"/>
</dbReference>
<dbReference type="EnsemblPlants" id="OsLiXu_05g0002230.02">
    <property type="protein sequence ID" value="OsLiXu_05g0002230.02"/>
    <property type="gene ID" value="OsLiXu_05g0002230"/>
</dbReference>
<dbReference type="EnsemblPlants" id="OsPr106_05g0002230.02">
    <property type="protein sequence ID" value="OsPr106_05g0002230.02"/>
    <property type="gene ID" value="OsPr106_05g0002230"/>
</dbReference>
<dbReference type="EnsemblPlants" id="OsZS97_05G002200_02">
    <property type="protein sequence ID" value="OsZS97_05G002200_02"/>
    <property type="gene ID" value="OsZS97_05G002200"/>
</dbReference>
<dbReference type="Gramene" id="BGIOSGA018883-TA">
    <property type="protein sequence ID" value="BGIOSGA018883-PA"/>
    <property type="gene ID" value="BGIOSGA018883"/>
</dbReference>
<dbReference type="Gramene" id="OsIR64_05g0002190.01">
    <property type="protein sequence ID" value="OsIR64_05g0002190.01"/>
    <property type="gene ID" value="OsIR64_05g0002190"/>
</dbReference>
<dbReference type="Gramene" id="OsLaMu_05g0002240.01">
    <property type="protein sequence ID" value="OsLaMu_05g0002240.01"/>
    <property type="gene ID" value="OsLaMu_05g0002240"/>
</dbReference>
<dbReference type="Gramene" id="OsLiXu_05g0002230.02">
    <property type="protein sequence ID" value="OsLiXu_05g0002230.02"/>
    <property type="gene ID" value="OsLiXu_05g0002230"/>
</dbReference>
<dbReference type="Gramene" id="OsPr106_05g0002230.02">
    <property type="protein sequence ID" value="OsPr106_05g0002230.02"/>
    <property type="gene ID" value="OsPr106_05g0002230"/>
</dbReference>
<dbReference type="Gramene" id="OsZS97_05G002200_02">
    <property type="protein sequence ID" value="OsZS97_05G002200_02"/>
    <property type="gene ID" value="OsZS97_05G002200"/>
</dbReference>
<dbReference type="HOGENOM" id="CLU_040111_0_2_1"/>
<dbReference type="OMA" id="STHYRWP"/>
<dbReference type="Proteomes" id="UP000007015">
    <property type="component" value="Chromosome 5"/>
</dbReference>
<dbReference type="GO" id="GO:0005634">
    <property type="term" value="C:nucleus"/>
    <property type="evidence" value="ECO:0007669"/>
    <property type="project" value="UniProtKB-SubCell"/>
</dbReference>
<dbReference type="GO" id="GO:0003677">
    <property type="term" value="F:DNA binding"/>
    <property type="evidence" value="ECO:0007669"/>
    <property type="project" value="UniProtKB-KW"/>
</dbReference>
<dbReference type="GO" id="GO:0000981">
    <property type="term" value="F:DNA-binding transcription factor activity, RNA polymerase II-specific"/>
    <property type="evidence" value="ECO:0007669"/>
    <property type="project" value="InterPro"/>
</dbReference>
<dbReference type="CDD" id="cd00086">
    <property type="entry name" value="homeodomain"/>
    <property type="match status" value="1"/>
</dbReference>
<dbReference type="Gene3D" id="1.10.10.60">
    <property type="entry name" value="Homeodomain-like"/>
    <property type="match status" value="1"/>
</dbReference>
<dbReference type="InterPro" id="IPR005539">
    <property type="entry name" value="ELK_dom"/>
</dbReference>
<dbReference type="InterPro" id="IPR001356">
    <property type="entry name" value="HD"/>
</dbReference>
<dbReference type="InterPro" id="IPR017970">
    <property type="entry name" value="Homeobox_CS"/>
</dbReference>
<dbReference type="InterPro" id="IPR009057">
    <property type="entry name" value="Homeodomain-like_sf"/>
</dbReference>
<dbReference type="InterPro" id="IPR008422">
    <property type="entry name" value="KN_HD"/>
</dbReference>
<dbReference type="InterPro" id="IPR005540">
    <property type="entry name" value="KNOX1"/>
</dbReference>
<dbReference type="InterPro" id="IPR005541">
    <property type="entry name" value="KNOX2"/>
</dbReference>
<dbReference type="InterPro" id="IPR050224">
    <property type="entry name" value="TALE_homeobox"/>
</dbReference>
<dbReference type="PANTHER" id="PTHR11850">
    <property type="entry name" value="HOMEOBOX PROTEIN TRANSCRIPTION FACTORS"/>
    <property type="match status" value="1"/>
</dbReference>
<dbReference type="Pfam" id="PF03789">
    <property type="entry name" value="ELK"/>
    <property type="match status" value="1"/>
</dbReference>
<dbReference type="Pfam" id="PF05920">
    <property type="entry name" value="Homeobox_KN"/>
    <property type="match status" value="1"/>
</dbReference>
<dbReference type="Pfam" id="PF03790">
    <property type="entry name" value="KNOX1"/>
    <property type="match status" value="1"/>
</dbReference>
<dbReference type="Pfam" id="PF03791">
    <property type="entry name" value="KNOX2"/>
    <property type="match status" value="1"/>
</dbReference>
<dbReference type="SMART" id="SM01188">
    <property type="entry name" value="ELK"/>
    <property type="match status" value="1"/>
</dbReference>
<dbReference type="SMART" id="SM00389">
    <property type="entry name" value="HOX"/>
    <property type="match status" value="1"/>
</dbReference>
<dbReference type="SMART" id="SM01255">
    <property type="entry name" value="KNOX1"/>
    <property type="match status" value="1"/>
</dbReference>
<dbReference type="SMART" id="SM01256">
    <property type="entry name" value="KNOX2"/>
    <property type="match status" value="1"/>
</dbReference>
<dbReference type="SUPFAM" id="SSF46689">
    <property type="entry name" value="Homeodomain-like"/>
    <property type="match status" value="1"/>
</dbReference>
<dbReference type="PROSITE" id="PS51213">
    <property type="entry name" value="ELK"/>
    <property type="match status" value="1"/>
</dbReference>
<dbReference type="PROSITE" id="PS00027">
    <property type="entry name" value="HOMEOBOX_1"/>
    <property type="match status" value="1"/>
</dbReference>
<dbReference type="PROSITE" id="PS50071">
    <property type="entry name" value="HOMEOBOX_2"/>
    <property type="match status" value="1"/>
</dbReference>
<gene>
    <name type="primary">OSH71</name>
    <name type="synonym">HOS9</name>
    <name type="ORF">OsI_017649/OsI_017650</name>
</gene>
<sequence>MEDLYSIHPGISRGGGGGGGGAASEASGVAGGGSSPPHPPPPATTAAAADLTELMKAQIAGHPSYPSLLSAYIECRKVGAPPEVTTLLEEIGREGRGGGGGATAGGEIGLDPELDEFMETYCRVLERYKEELTRPFDEAASFLTGIHTQLASLCGGAPPPTDNSDEMVGSSEDEPCSGDADAADFGQEHSSRLADHELKEMLLKKYSGCLSRLRSEFLKKRKKGKLPKDARSALMDWWNTHYRWPYPTEEDKVRLAAMTGLDPKQINNWFINQRKRHWKPSEDMRFALMEGVTGGSSSGTTLYFDTGTIGP</sequence>
<protein>
    <recommendedName>
        <fullName>Homeobox protein knotted-1-like 10</fullName>
    </recommendedName>
    <alternativeName>
        <fullName>Homeobox protein HOS9</fullName>
    </alternativeName>
    <alternativeName>
        <fullName>Homeobox protein OSH71</fullName>
    </alternativeName>
    <alternativeName>
        <fullName>Homeobox protein knotted-1-like 2</fullName>
        <shortName>Oskn2</shortName>
    </alternativeName>
</protein>
<evidence type="ECO:0000255" key="1">
    <source>
        <dbReference type="PROSITE-ProRule" id="PRU00108"/>
    </source>
</evidence>
<evidence type="ECO:0000255" key="2">
    <source>
        <dbReference type="PROSITE-ProRule" id="PRU00559"/>
    </source>
</evidence>
<evidence type="ECO:0000256" key="3">
    <source>
        <dbReference type="SAM" id="MobiDB-lite"/>
    </source>
</evidence>
<evidence type="ECO:0000269" key="4">
    <source>
    </source>
</evidence>
<feature type="chain" id="PRO_0000360013" description="Homeobox protein knotted-1-like 10">
    <location>
        <begin position="1"/>
        <end position="311"/>
    </location>
</feature>
<feature type="domain" description="ELK" evidence="2">
    <location>
        <begin position="197"/>
        <end position="217"/>
    </location>
</feature>
<feature type="DNA-binding region" description="Homeobox; TALE-type" evidence="1">
    <location>
        <begin position="218"/>
        <end position="281"/>
    </location>
</feature>
<feature type="region of interest" description="Disordered" evidence="3">
    <location>
        <begin position="1"/>
        <end position="45"/>
    </location>
</feature>
<feature type="region of interest" description="Disordered" evidence="3">
    <location>
        <begin position="153"/>
        <end position="184"/>
    </location>
</feature>
<feature type="compositionally biased region" description="Gly residues" evidence="3">
    <location>
        <begin position="12"/>
        <end position="22"/>
    </location>
</feature>
<comment type="function">
    <text evidence="4">Probable transcription factor that may be involved in shoot formation during embryogenesis.</text>
</comment>
<comment type="subcellular location">
    <subcellularLocation>
        <location evidence="1 2">Nucleus</location>
    </subcellularLocation>
</comment>
<comment type="developmental stage">
    <text evidence="4">Expressed in globular stage embryo 3 days after pollination (DAP) in a small region just below the center of the ventral portion of the embryo. At coleoptile stages, expressed in the corresponding region of the epiblast and the central part of the embryo, but weakly in the shoot apical meristem (SAM). At the shoot apex differentiation stage, expressed in the cells surrounding the provascular tissue and radicle primordia. In nearly mature embryos (6 DAP), expressed around the basal part of the provascular tissue and radicle, and around the shoot region at the base of the first leaf primordium and the notch between the SAM and the second leaf primordium. Expressed uniformly in the inflorescence meristem, but after the transition from inflorescence to the floral phase, located specifically in the notches between the floral meristem and glume primordia. At later stages of flower development, uniformly expressed throughout the corpus of the meristem, and in the notches between glume primordia but less well defined than in the previous stage.</text>
</comment>
<comment type="similarity">
    <text evidence="2">Belongs to the TALE/KNOX homeobox family.</text>
</comment>
<proteinExistence type="evidence at transcript level"/>
<name>KNOSA_ORYSI</name>
<accession>A2Y007</accession>
<accession>A2Y006</accession>
<accession>O65033</accession>
<accession>Q9AXJ1</accession>
<reference key="1">
    <citation type="journal article" date="1999" name="Plant Mol. Biol.">
        <title>Characterization of the KNOX class homeobox genes Oskn2 and Oskn3 identified in a collection of cDNA libraries covering the early stages of rice embryogenesis.</title>
        <authorList>
            <person name="Postma-Haarsma A.D."/>
            <person name="Verwoert I.I.G."/>
            <person name="Stronk O.P."/>
            <person name="Koster J."/>
            <person name="Lamers G.E.M."/>
            <person name="Hoge J.H."/>
            <person name="Meijer A.H."/>
        </authorList>
    </citation>
    <scope>NUCLEOTIDE SEQUENCE [MRNA]</scope>
    <scope>NUCLEOTIDE SEQUENCE [GENOMIC DNA] OF 1-164</scope>
    <scope>FUNCTION</scope>
    <scope>DEVELOPMENTAL STAGE</scope>
    <source>
        <strain>cv. IR58</strain>
    </source>
</reference>
<reference key="2">
    <citation type="journal article" date="2005" name="PLoS Biol.">
        <title>The genomes of Oryza sativa: a history of duplications.</title>
        <authorList>
            <person name="Yu J."/>
            <person name="Wang J."/>
            <person name="Lin W."/>
            <person name="Li S."/>
            <person name="Li H."/>
            <person name="Zhou J."/>
            <person name="Ni P."/>
            <person name="Dong W."/>
            <person name="Hu S."/>
            <person name="Zeng C."/>
            <person name="Zhang J."/>
            <person name="Zhang Y."/>
            <person name="Li R."/>
            <person name="Xu Z."/>
            <person name="Li S."/>
            <person name="Li X."/>
            <person name="Zheng H."/>
            <person name="Cong L."/>
            <person name="Lin L."/>
            <person name="Yin J."/>
            <person name="Geng J."/>
            <person name="Li G."/>
            <person name="Shi J."/>
            <person name="Liu J."/>
            <person name="Lv H."/>
            <person name="Li J."/>
            <person name="Wang J."/>
            <person name="Deng Y."/>
            <person name="Ran L."/>
            <person name="Shi X."/>
            <person name="Wang X."/>
            <person name="Wu Q."/>
            <person name="Li C."/>
            <person name="Ren X."/>
            <person name="Wang J."/>
            <person name="Wang X."/>
            <person name="Li D."/>
            <person name="Liu D."/>
            <person name="Zhang X."/>
            <person name="Ji Z."/>
            <person name="Zhao W."/>
            <person name="Sun Y."/>
            <person name="Zhang Z."/>
            <person name="Bao J."/>
            <person name="Han Y."/>
            <person name="Dong L."/>
            <person name="Ji J."/>
            <person name="Chen P."/>
            <person name="Wu S."/>
            <person name="Liu J."/>
            <person name="Xiao Y."/>
            <person name="Bu D."/>
            <person name="Tan J."/>
            <person name="Yang L."/>
            <person name="Ye C."/>
            <person name="Zhang J."/>
            <person name="Xu J."/>
            <person name="Zhou Y."/>
            <person name="Yu Y."/>
            <person name="Zhang B."/>
            <person name="Zhuang S."/>
            <person name="Wei H."/>
            <person name="Liu B."/>
            <person name="Lei M."/>
            <person name="Yu H."/>
            <person name="Li Y."/>
            <person name="Xu H."/>
            <person name="Wei S."/>
            <person name="He X."/>
            <person name="Fang L."/>
            <person name="Zhang Z."/>
            <person name="Zhang Y."/>
            <person name="Huang X."/>
            <person name="Su Z."/>
            <person name="Tong W."/>
            <person name="Li J."/>
            <person name="Tong Z."/>
            <person name="Li S."/>
            <person name="Ye J."/>
            <person name="Wang L."/>
            <person name="Fang L."/>
            <person name="Lei T."/>
            <person name="Chen C.-S."/>
            <person name="Chen H.-C."/>
            <person name="Xu Z."/>
            <person name="Li H."/>
            <person name="Huang H."/>
            <person name="Zhang F."/>
            <person name="Xu H."/>
            <person name="Li N."/>
            <person name="Zhao C."/>
            <person name="Li S."/>
            <person name="Dong L."/>
            <person name="Huang Y."/>
            <person name="Li L."/>
            <person name="Xi Y."/>
            <person name="Qi Q."/>
            <person name="Li W."/>
            <person name="Zhang B."/>
            <person name="Hu W."/>
            <person name="Zhang Y."/>
            <person name="Tian X."/>
            <person name="Jiao Y."/>
            <person name="Liang X."/>
            <person name="Jin J."/>
            <person name="Gao L."/>
            <person name="Zheng W."/>
            <person name="Hao B."/>
            <person name="Liu S.-M."/>
            <person name="Wang W."/>
            <person name="Yuan L."/>
            <person name="Cao M."/>
            <person name="McDermott J."/>
            <person name="Samudrala R."/>
            <person name="Wang J."/>
            <person name="Wong G.K.-S."/>
            <person name="Yang H."/>
        </authorList>
    </citation>
    <scope>NUCLEOTIDE SEQUENCE [LARGE SCALE GENOMIC DNA]</scope>
    <source>
        <strain>cv. 93-11</strain>
    </source>
</reference>
<reference key="3">
    <citation type="journal article" date="2008" name="FEBS J.">
        <title>Genome-wide identification, classification, evolutionary expansion and expression analyses of homeobox genes in rice.</title>
        <authorList>
            <person name="Jain M."/>
            <person name="Tyagi A.K."/>
            <person name="Khurana J.P."/>
        </authorList>
    </citation>
    <scope>GENE FAMILY</scope>
    <scope>NOMENCLATURE</scope>
</reference>
<organism>
    <name type="scientific">Oryza sativa subsp. indica</name>
    <name type="common">Rice</name>
    <dbReference type="NCBI Taxonomy" id="39946"/>
    <lineage>
        <taxon>Eukaryota</taxon>
        <taxon>Viridiplantae</taxon>
        <taxon>Streptophyta</taxon>
        <taxon>Embryophyta</taxon>
        <taxon>Tracheophyta</taxon>
        <taxon>Spermatophyta</taxon>
        <taxon>Magnoliopsida</taxon>
        <taxon>Liliopsida</taxon>
        <taxon>Poales</taxon>
        <taxon>Poaceae</taxon>
        <taxon>BOP clade</taxon>
        <taxon>Oryzoideae</taxon>
        <taxon>Oryzeae</taxon>
        <taxon>Oryzinae</taxon>
        <taxon>Oryza</taxon>
        <taxon>Oryza sativa</taxon>
    </lineage>
</organism>
<keyword id="KW-0238">DNA-binding</keyword>
<keyword id="KW-0371">Homeobox</keyword>
<keyword id="KW-0539">Nucleus</keyword>
<keyword id="KW-1185">Reference proteome</keyword>